<gene>
    <name evidence="1" type="primary">iscR</name>
    <name type="ordered locus">SPAB_00388</name>
</gene>
<protein>
    <recommendedName>
        <fullName evidence="1">HTH-type transcriptional regulator IscR</fullName>
    </recommendedName>
</protein>
<sequence>MRLTSKGRYAVTAMLDVALNSEAGPVPLADISERQGISLSYLEQLFSRLRKNGLVSSVRGPGGGYLLGKDAGSIAVGEVISAVDESVDATRCQGKGGCQGGDKCLTHALWRDLSDRLTGFLNNITLGELVNNQEVLDVSGRQHTHDAPRASGRAQDAIDVKLRA</sequence>
<comment type="function">
    <text evidence="1">Regulates the transcription of several operons and genes involved in the biogenesis of Fe-S clusters and Fe-S-containing proteins.</text>
</comment>
<comment type="cofactor">
    <cofactor evidence="1">
        <name>[2Fe-2S] cluster</name>
        <dbReference type="ChEBI" id="CHEBI:190135"/>
    </cofactor>
    <text evidence="1">Binds 1 [2Fe-2S] cluster.</text>
</comment>
<proteinExistence type="inferred from homology"/>
<keyword id="KW-0001">2Fe-2S</keyword>
<keyword id="KW-0010">Activator</keyword>
<keyword id="KW-0238">DNA-binding</keyword>
<keyword id="KW-0408">Iron</keyword>
<keyword id="KW-0411">Iron-sulfur</keyword>
<keyword id="KW-0479">Metal-binding</keyword>
<keyword id="KW-0678">Repressor</keyword>
<keyword id="KW-0804">Transcription</keyword>
<keyword id="KW-0805">Transcription regulation</keyword>
<dbReference type="EMBL" id="CP000886">
    <property type="protein sequence ID" value="ABX65823.1"/>
    <property type="molecule type" value="Genomic_DNA"/>
</dbReference>
<dbReference type="RefSeq" id="WP_001241346.1">
    <property type="nucleotide sequence ID" value="NC_010102.1"/>
</dbReference>
<dbReference type="SMR" id="A9N1X3"/>
<dbReference type="KEGG" id="spq:SPAB_00388"/>
<dbReference type="PATRIC" id="fig|1016998.12.peg.366"/>
<dbReference type="HOGENOM" id="CLU_107144_0_0_6"/>
<dbReference type="BioCyc" id="SENT1016998:SPAB_RS01595-MONOMER"/>
<dbReference type="Proteomes" id="UP000008556">
    <property type="component" value="Chromosome"/>
</dbReference>
<dbReference type="GO" id="GO:0005829">
    <property type="term" value="C:cytosol"/>
    <property type="evidence" value="ECO:0007669"/>
    <property type="project" value="TreeGrafter"/>
</dbReference>
<dbReference type="GO" id="GO:0051537">
    <property type="term" value="F:2 iron, 2 sulfur cluster binding"/>
    <property type="evidence" value="ECO:0007669"/>
    <property type="project" value="UniProtKB-KW"/>
</dbReference>
<dbReference type="GO" id="GO:0003700">
    <property type="term" value="F:DNA-binding transcription factor activity"/>
    <property type="evidence" value="ECO:0007669"/>
    <property type="project" value="UniProtKB-UniRule"/>
</dbReference>
<dbReference type="GO" id="GO:0003690">
    <property type="term" value="F:double-stranded DNA binding"/>
    <property type="evidence" value="ECO:0007669"/>
    <property type="project" value="UniProtKB-UniRule"/>
</dbReference>
<dbReference type="GO" id="GO:0005506">
    <property type="term" value="F:iron ion binding"/>
    <property type="evidence" value="ECO:0007669"/>
    <property type="project" value="UniProtKB-UniRule"/>
</dbReference>
<dbReference type="FunFam" id="1.10.10.10:FF:000026">
    <property type="entry name" value="HTH-type transcriptional regulator IscR"/>
    <property type="match status" value="1"/>
</dbReference>
<dbReference type="Gene3D" id="1.10.10.10">
    <property type="entry name" value="Winged helix-like DNA-binding domain superfamily/Winged helix DNA-binding domain"/>
    <property type="match status" value="1"/>
</dbReference>
<dbReference type="HAMAP" id="MF_01176">
    <property type="entry name" value="HTH_type_IscR"/>
    <property type="match status" value="1"/>
</dbReference>
<dbReference type="InterPro" id="IPR010242">
    <property type="entry name" value="TF_HTH_IscR"/>
</dbReference>
<dbReference type="InterPro" id="IPR030489">
    <property type="entry name" value="TR_Rrf2-type_CS"/>
</dbReference>
<dbReference type="InterPro" id="IPR000944">
    <property type="entry name" value="Tscrpt_reg_Rrf2"/>
</dbReference>
<dbReference type="InterPro" id="IPR036388">
    <property type="entry name" value="WH-like_DNA-bd_sf"/>
</dbReference>
<dbReference type="InterPro" id="IPR036390">
    <property type="entry name" value="WH_DNA-bd_sf"/>
</dbReference>
<dbReference type="NCBIfam" id="TIGR02010">
    <property type="entry name" value="IscR"/>
    <property type="match status" value="1"/>
</dbReference>
<dbReference type="NCBIfam" id="NF008110">
    <property type="entry name" value="PRK10857.1"/>
    <property type="match status" value="1"/>
</dbReference>
<dbReference type="NCBIfam" id="TIGR00738">
    <property type="entry name" value="rrf2_super"/>
    <property type="match status" value="1"/>
</dbReference>
<dbReference type="PANTHER" id="PTHR33221:SF5">
    <property type="entry name" value="HTH-TYPE TRANSCRIPTIONAL REGULATOR ISCR"/>
    <property type="match status" value="1"/>
</dbReference>
<dbReference type="PANTHER" id="PTHR33221">
    <property type="entry name" value="WINGED HELIX-TURN-HELIX TRANSCRIPTIONAL REGULATOR, RRF2 FAMILY"/>
    <property type="match status" value="1"/>
</dbReference>
<dbReference type="Pfam" id="PF02082">
    <property type="entry name" value="Rrf2"/>
    <property type="match status" value="1"/>
</dbReference>
<dbReference type="SUPFAM" id="SSF46785">
    <property type="entry name" value="Winged helix' DNA-binding domain"/>
    <property type="match status" value="1"/>
</dbReference>
<dbReference type="PROSITE" id="PS01332">
    <property type="entry name" value="HTH_RRF2_1"/>
    <property type="match status" value="1"/>
</dbReference>
<dbReference type="PROSITE" id="PS51197">
    <property type="entry name" value="HTH_RRF2_2"/>
    <property type="match status" value="1"/>
</dbReference>
<reference key="1">
    <citation type="submission" date="2007-11" db="EMBL/GenBank/DDBJ databases">
        <authorList>
            <consortium name="The Salmonella enterica serovar Paratyphi B Genome Sequencing Project"/>
            <person name="McClelland M."/>
            <person name="Sanderson E.K."/>
            <person name="Porwollik S."/>
            <person name="Spieth J."/>
            <person name="Clifton W.S."/>
            <person name="Fulton R."/>
            <person name="Cordes M."/>
            <person name="Wollam A."/>
            <person name="Shah N."/>
            <person name="Pepin K."/>
            <person name="Bhonagiri V."/>
            <person name="Nash W."/>
            <person name="Johnson M."/>
            <person name="Thiruvilangam P."/>
            <person name="Wilson R."/>
        </authorList>
    </citation>
    <scope>NUCLEOTIDE SEQUENCE [LARGE SCALE GENOMIC DNA]</scope>
    <source>
        <strain>ATCC BAA-1250 / SPB7</strain>
    </source>
</reference>
<accession>A9N1X3</accession>
<feature type="chain" id="PRO_1000085423" description="HTH-type transcriptional regulator IscR">
    <location>
        <begin position="1"/>
        <end position="164"/>
    </location>
</feature>
<feature type="domain" description="HTH rrf2-type" evidence="1">
    <location>
        <begin position="2"/>
        <end position="131"/>
    </location>
</feature>
<feature type="DNA-binding region" description="H-T-H motif" evidence="1">
    <location>
        <begin position="28"/>
        <end position="51"/>
    </location>
</feature>
<feature type="binding site" evidence="1">
    <location>
        <position position="92"/>
    </location>
    <ligand>
        <name>[2Fe-2S] cluster</name>
        <dbReference type="ChEBI" id="CHEBI:190135"/>
    </ligand>
</feature>
<feature type="binding site" evidence="1">
    <location>
        <position position="98"/>
    </location>
    <ligand>
        <name>[2Fe-2S] cluster</name>
        <dbReference type="ChEBI" id="CHEBI:190135"/>
    </ligand>
</feature>
<feature type="binding site" evidence="1">
    <location>
        <position position="104"/>
    </location>
    <ligand>
        <name>[2Fe-2S] cluster</name>
        <dbReference type="ChEBI" id="CHEBI:190135"/>
    </ligand>
</feature>
<organism>
    <name type="scientific">Salmonella paratyphi B (strain ATCC BAA-1250 / SPB7)</name>
    <dbReference type="NCBI Taxonomy" id="1016998"/>
    <lineage>
        <taxon>Bacteria</taxon>
        <taxon>Pseudomonadati</taxon>
        <taxon>Pseudomonadota</taxon>
        <taxon>Gammaproteobacteria</taxon>
        <taxon>Enterobacterales</taxon>
        <taxon>Enterobacteriaceae</taxon>
        <taxon>Salmonella</taxon>
    </lineage>
</organism>
<evidence type="ECO:0000255" key="1">
    <source>
        <dbReference type="HAMAP-Rule" id="MF_01176"/>
    </source>
</evidence>
<name>ISCR_SALPB</name>